<sequence>MTEDTSMQSTLNATLPETDMPLAEKEAAVEKQEYRNAMARLGSAVNIITTDGPGGRAGFTASAVCSVTDTPPTLLVCLNRSASVHPAFIQNQVLCVNTLADSHESLSNLFGGKTPMEQRFDAAEWTDLATGSPILTNALVSFDCKVTQITRVGTHDIMFCEVVALRCNDDCHGLAYFDRRYHPLMRQIAC</sequence>
<proteinExistence type="inferred from homology"/>
<name>RUTF_PANAM</name>
<keyword id="KW-0285">Flavoprotein</keyword>
<keyword id="KW-0288">FMN</keyword>
<keyword id="KW-0520">NAD</keyword>
<keyword id="KW-0560">Oxidoreductase</keyword>
<keyword id="KW-1185">Reference proteome</keyword>
<accession>D4GEU9</accession>
<evidence type="ECO:0000255" key="1">
    <source>
        <dbReference type="HAMAP-Rule" id="MF_00833"/>
    </source>
</evidence>
<feature type="chain" id="PRO_0000403038" description="FMN reductase (NADH) RutF">
    <location>
        <begin position="1"/>
        <end position="190"/>
    </location>
</feature>
<dbReference type="EC" id="1.5.1.42" evidence="1"/>
<dbReference type="EMBL" id="CP001875">
    <property type="protein sequence ID" value="ADD79205.1"/>
    <property type="molecule type" value="Genomic_DNA"/>
</dbReference>
<dbReference type="SMR" id="D4GEU9"/>
<dbReference type="STRING" id="706191.PANA_4038"/>
<dbReference type="KEGG" id="pam:PANA_4038"/>
<dbReference type="eggNOG" id="COG1853">
    <property type="taxonomic scope" value="Bacteria"/>
</dbReference>
<dbReference type="HOGENOM" id="CLU_059021_2_2_6"/>
<dbReference type="Proteomes" id="UP000001702">
    <property type="component" value="Chromosome"/>
</dbReference>
<dbReference type="GO" id="GO:0010181">
    <property type="term" value="F:FMN binding"/>
    <property type="evidence" value="ECO:0007669"/>
    <property type="project" value="InterPro"/>
</dbReference>
<dbReference type="GO" id="GO:0052874">
    <property type="term" value="F:FMN reductase (NADH) activity"/>
    <property type="evidence" value="ECO:0007669"/>
    <property type="project" value="UniProtKB-EC"/>
</dbReference>
<dbReference type="GO" id="GO:0008752">
    <property type="term" value="F:FMN reductase [NAD(P)H] activity"/>
    <property type="evidence" value="ECO:0007669"/>
    <property type="project" value="InterPro"/>
</dbReference>
<dbReference type="GO" id="GO:0042602">
    <property type="term" value="F:riboflavin reductase (NADPH) activity"/>
    <property type="evidence" value="ECO:0007669"/>
    <property type="project" value="UniProtKB-UniRule"/>
</dbReference>
<dbReference type="GO" id="GO:0019740">
    <property type="term" value="P:nitrogen utilization"/>
    <property type="evidence" value="ECO:0007669"/>
    <property type="project" value="UniProtKB-UniRule"/>
</dbReference>
<dbReference type="GO" id="GO:0006212">
    <property type="term" value="P:uracil catabolic process"/>
    <property type="evidence" value="ECO:0007669"/>
    <property type="project" value="UniProtKB-UniRule"/>
</dbReference>
<dbReference type="Gene3D" id="2.30.110.10">
    <property type="entry name" value="Electron Transport, Fmn-binding Protein, Chain A"/>
    <property type="match status" value="1"/>
</dbReference>
<dbReference type="HAMAP" id="MF_00833">
    <property type="entry name" value="RutF"/>
    <property type="match status" value="1"/>
</dbReference>
<dbReference type="InterPro" id="IPR002563">
    <property type="entry name" value="Flavin_Rdtase-like_dom"/>
</dbReference>
<dbReference type="InterPro" id="IPR050268">
    <property type="entry name" value="NADH-dep_flavin_reductase"/>
</dbReference>
<dbReference type="InterPro" id="IPR019917">
    <property type="entry name" value="RutF"/>
</dbReference>
<dbReference type="InterPro" id="IPR012349">
    <property type="entry name" value="Split_barrel_FMN-bd"/>
</dbReference>
<dbReference type="NCBIfam" id="TIGR03615">
    <property type="entry name" value="RutF"/>
    <property type="match status" value="1"/>
</dbReference>
<dbReference type="PANTHER" id="PTHR30466">
    <property type="entry name" value="FLAVIN REDUCTASE"/>
    <property type="match status" value="1"/>
</dbReference>
<dbReference type="PANTHER" id="PTHR30466:SF1">
    <property type="entry name" value="FMN REDUCTASE (NADH) RUTF"/>
    <property type="match status" value="1"/>
</dbReference>
<dbReference type="Pfam" id="PF01613">
    <property type="entry name" value="Flavin_Reduct"/>
    <property type="match status" value="1"/>
</dbReference>
<dbReference type="SMART" id="SM00903">
    <property type="entry name" value="Flavin_Reduct"/>
    <property type="match status" value="1"/>
</dbReference>
<dbReference type="SUPFAM" id="SSF50475">
    <property type="entry name" value="FMN-binding split barrel"/>
    <property type="match status" value="1"/>
</dbReference>
<reference key="1">
    <citation type="journal article" date="2010" name="J. Bacteriol.">
        <title>Genome sequence of Pantoea ananatis LMG20103, the causative agent of Eucalyptus blight and dieback.</title>
        <authorList>
            <person name="De Maayer P."/>
            <person name="Chan W.Y."/>
            <person name="Venter S.N."/>
            <person name="Toth I.K."/>
            <person name="Birch P.R."/>
            <person name="Joubert F."/>
            <person name="Coutinho T.A."/>
        </authorList>
    </citation>
    <scope>NUCLEOTIDE SEQUENCE [LARGE SCALE GENOMIC DNA]</scope>
    <source>
        <strain>LMG 20103</strain>
    </source>
</reference>
<gene>
    <name evidence="1" type="primary">rutF</name>
    <name type="ordered locus">PANA_4038</name>
</gene>
<protein>
    <recommendedName>
        <fullName evidence="1">FMN reductase (NADH) RutF</fullName>
        <ecNumber evidence="1">1.5.1.42</ecNumber>
    </recommendedName>
    <alternativeName>
        <fullName evidence="1">FMN reductase</fullName>
    </alternativeName>
    <alternativeName>
        <fullName evidence="1">NADH-flavin reductase RutF</fullName>
    </alternativeName>
    <alternativeName>
        <fullName evidence="1">NADH:flavin oxidoreductase</fullName>
    </alternativeName>
</protein>
<comment type="function">
    <text evidence="1">Catalyzes the reduction of FMN to FMNH2 which is used to reduce pyrimidine by RutA via the Rut pathway.</text>
</comment>
<comment type="catalytic activity">
    <reaction evidence="1">
        <text>FMNH2 + NAD(+) = FMN + NADH + 2 H(+)</text>
        <dbReference type="Rhea" id="RHEA:21620"/>
        <dbReference type="ChEBI" id="CHEBI:15378"/>
        <dbReference type="ChEBI" id="CHEBI:57540"/>
        <dbReference type="ChEBI" id="CHEBI:57618"/>
        <dbReference type="ChEBI" id="CHEBI:57945"/>
        <dbReference type="ChEBI" id="CHEBI:58210"/>
        <dbReference type="EC" id="1.5.1.42"/>
    </reaction>
</comment>
<comment type="similarity">
    <text evidence="1">Belongs to the non-flavoprotein flavin reductase family. RutF subfamily.</text>
</comment>
<organism>
    <name type="scientific">Pantoea ananatis (strain LMG 20103)</name>
    <dbReference type="NCBI Taxonomy" id="706191"/>
    <lineage>
        <taxon>Bacteria</taxon>
        <taxon>Pseudomonadati</taxon>
        <taxon>Pseudomonadota</taxon>
        <taxon>Gammaproteobacteria</taxon>
        <taxon>Enterobacterales</taxon>
        <taxon>Erwiniaceae</taxon>
        <taxon>Pantoea</taxon>
    </lineage>
</organism>